<reference key="1">
    <citation type="journal article" date="2009" name="Environ. Microbiol.">
        <title>Genome sequence of Desulfobacterium autotrophicum HRM2, a marine sulfate reducer oxidizing organic carbon completely to carbon dioxide.</title>
        <authorList>
            <person name="Strittmatter A.W."/>
            <person name="Liesegang H."/>
            <person name="Rabus R."/>
            <person name="Decker I."/>
            <person name="Amann J."/>
            <person name="Andres S."/>
            <person name="Henne A."/>
            <person name="Fricke W.F."/>
            <person name="Martinez-Arias R."/>
            <person name="Bartels D."/>
            <person name="Goesmann A."/>
            <person name="Krause L."/>
            <person name="Puehler A."/>
            <person name="Klenk H.P."/>
            <person name="Richter M."/>
            <person name="Schuler M."/>
            <person name="Gloeckner F.O."/>
            <person name="Meyerdierks A."/>
            <person name="Gottschalk G."/>
            <person name="Amann R."/>
        </authorList>
    </citation>
    <scope>NUCLEOTIDE SEQUENCE [LARGE SCALE GENOMIC DNA]</scope>
    <source>
        <strain>ATCC 43914 / DSM 3382 / VKM B-1955 / HRM2</strain>
    </source>
</reference>
<protein>
    <recommendedName>
        <fullName evidence="1">Aspartyl/glutamyl-tRNA(Asn/Gln) amidotransferase subunit C</fullName>
        <shortName evidence="1">Asp/Glu-ADT subunit C</shortName>
        <ecNumber evidence="1">6.3.5.-</ecNumber>
    </recommendedName>
</protein>
<keyword id="KW-0067">ATP-binding</keyword>
<keyword id="KW-0436">Ligase</keyword>
<keyword id="KW-0547">Nucleotide-binding</keyword>
<keyword id="KW-0648">Protein biosynthesis</keyword>
<keyword id="KW-1185">Reference proteome</keyword>
<dbReference type="EC" id="6.3.5.-" evidence="1"/>
<dbReference type="EMBL" id="CP001087">
    <property type="protein sequence ID" value="ACN16236.1"/>
    <property type="molecule type" value="Genomic_DNA"/>
</dbReference>
<dbReference type="SMR" id="C0QKZ6"/>
<dbReference type="STRING" id="177437.HRM2_31530"/>
<dbReference type="KEGG" id="dat:HRM2_31530"/>
<dbReference type="eggNOG" id="COG0721">
    <property type="taxonomic scope" value="Bacteria"/>
</dbReference>
<dbReference type="HOGENOM" id="CLU_105899_6_1_7"/>
<dbReference type="OrthoDB" id="9813938at2"/>
<dbReference type="Proteomes" id="UP000000442">
    <property type="component" value="Chromosome"/>
</dbReference>
<dbReference type="GO" id="GO:0050566">
    <property type="term" value="F:asparaginyl-tRNA synthase (glutamine-hydrolyzing) activity"/>
    <property type="evidence" value="ECO:0007669"/>
    <property type="project" value="RHEA"/>
</dbReference>
<dbReference type="GO" id="GO:0005524">
    <property type="term" value="F:ATP binding"/>
    <property type="evidence" value="ECO:0007669"/>
    <property type="project" value="UniProtKB-KW"/>
</dbReference>
<dbReference type="GO" id="GO:0050567">
    <property type="term" value="F:glutaminyl-tRNA synthase (glutamine-hydrolyzing) activity"/>
    <property type="evidence" value="ECO:0007669"/>
    <property type="project" value="UniProtKB-UniRule"/>
</dbReference>
<dbReference type="GO" id="GO:0006450">
    <property type="term" value="P:regulation of translational fidelity"/>
    <property type="evidence" value="ECO:0007669"/>
    <property type="project" value="InterPro"/>
</dbReference>
<dbReference type="GO" id="GO:0006412">
    <property type="term" value="P:translation"/>
    <property type="evidence" value="ECO:0007669"/>
    <property type="project" value="UniProtKB-UniRule"/>
</dbReference>
<dbReference type="Gene3D" id="1.10.20.60">
    <property type="entry name" value="Glu-tRNAGln amidotransferase C subunit, N-terminal domain"/>
    <property type="match status" value="1"/>
</dbReference>
<dbReference type="HAMAP" id="MF_00122">
    <property type="entry name" value="GatC"/>
    <property type="match status" value="1"/>
</dbReference>
<dbReference type="InterPro" id="IPR036113">
    <property type="entry name" value="Asp/Glu-ADT_sf_sub_c"/>
</dbReference>
<dbReference type="InterPro" id="IPR003837">
    <property type="entry name" value="GatC"/>
</dbReference>
<dbReference type="NCBIfam" id="TIGR00135">
    <property type="entry name" value="gatC"/>
    <property type="match status" value="1"/>
</dbReference>
<dbReference type="Pfam" id="PF02686">
    <property type="entry name" value="GatC"/>
    <property type="match status" value="1"/>
</dbReference>
<dbReference type="SUPFAM" id="SSF141000">
    <property type="entry name" value="Glu-tRNAGln amidotransferase C subunit"/>
    <property type="match status" value="1"/>
</dbReference>
<gene>
    <name evidence="1" type="primary">gatC</name>
    <name type="ordered locus">HRM2_31530</name>
</gene>
<evidence type="ECO:0000255" key="1">
    <source>
        <dbReference type="HAMAP-Rule" id="MF_00122"/>
    </source>
</evidence>
<organism>
    <name type="scientific">Desulforapulum autotrophicum (strain ATCC 43914 / DSM 3382 / VKM B-1955 / HRM2)</name>
    <name type="common">Desulfobacterium autotrophicum</name>
    <dbReference type="NCBI Taxonomy" id="177437"/>
    <lineage>
        <taxon>Bacteria</taxon>
        <taxon>Pseudomonadati</taxon>
        <taxon>Thermodesulfobacteriota</taxon>
        <taxon>Desulfobacteria</taxon>
        <taxon>Desulfobacterales</taxon>
        <taxon>Desulfobacteraceae</taxon>
        <taxon>Desulforapulum</taxon>
    </lineage>
</organism>
<comment type="function">
    <text evidence="1">Allows the formation of correctly charged Asn-tRNA(Asn) or Gln-tRNA(Gln) through the transamidation of misacylated Asp-tRNA(Asn) or Glu-tRNA(Gln) in organisms which lack either or both of asparaginyl-tRNA or glutaminyl-tRNA synthetases. The reaction takes place in the presence of glutamine and ATP through an activated phospho-Asp-tRNA(Asn) or phospho-Glu-tRNA(Gln).</text>
</comment>
<comment type="catalytic activity">
    <reaction evidence="1">
        <text>L-glutamyl-tRNA(Gln) + L-glutamine + ATP + H2O = L-glutaminyl-tRNA(Gln) + L-glutamate + ADP + phosphate + H(+)</text>
        <dbReference type="Rhea" id="RHEA:17521"/>
        <dbReference type="Rhea" id="RHEA-COMP:9681"/>
        <dbReference type="Rhea" id="RHEA-COMP:9684"/>
        <dbReference type="ChEBI" id="CHEBI:15377"/>
        <dbReference type="ChEBI" id="CHEBI:15378"/>
        <dbReference type="ChEBI" id="CHEBI:29985"/>
        <dbReference type="ChEBI" id="CHEBI:30616"/>
        <dbReference type="ChEBI" id="CHEBI:43474"/>
        <dbReference type="ChEBI" id="CHEBI:58359"/>
        <dbReference type="ChEBI" id="CHEBI:78520"/>
        <dbReference type="ChEBI" id="CHEBI:78521"/>
        <dbReference type="ChEBI" id="CHEBI:456216"/>
    </reaction>
</comment>
<comment type="catalytic activity">
    <reaction evidence="1">
        <text>L-aspartyl-tRNA(Asn) + L-glutamine + ATP + H2O = L-asparaginyl-tRNA(Asn) + L-glutamate + ADP + phosphate + 2 H(+)</text>
        <dbReference type="Rhea" id="RHEA:14513"/>
        <dbReference type="Rhea" id="RHEA-COMP:9674"/>
        <dbReference type="Rhea" id="RHEA-COMP:9677"/>
        <dbReference type="ChEBI" id="CHEBI:15377"/>
        <dbReference type="ChEBI" id="CHEBI:15378"/>
        <dbReference type="ChEBI" id="CHEBI:29985"/>
        <dbReference type="ChEBI" id="CHEBI:30616"/>
        <dbReference type="ChEBI" id="CHEBI:43474"/>
        <dbReference type="ChEBI" id="CHEBI:58359"/>
        <dbReference type="ChEBI" id="CHEBI:78515"/>
        <dbReference type="ChEBI" id="CHEBI:78516"/>
        <dbReference type="ChEBI" id="CHEBI:456216"/>
    </reaction>
</comment>
<comment type="subunit">
    <text evidence="1">Heterotrimer of A, B and C subunits.</text>
</comment>
<comment type="similarity">
    <text evidence="1">Belongs to the GatC family.</text>
</comment>
<name>GATC_DESAH</name>
<accession>C0QKZ6</accession>
<feature type="chain" id="PRO_1000203068" description="Aspartyl/glutamyl-tRNA(Asn/Gln) amidotransferase subunit C">
    <location>
        <begin position="1"/>
        <end position="95"/>
    </location>
</feature>
<proteinExistence type="inferred from homology"/>
<sequence>MKISKQDVEHLAHLARLAVDGSQVESLTAQVSNILDYMDVLKEVDVDGVPLASGAALGTNVFRQDQVKPSPGPCVTLANAPERDDDFYTVPRIVG</sequence>